<feature type="chain" id="PRO_1000166540" description="ATP synthase subunit alpha">
    <location>
        <begin position="1"/>
        <end position="502"/>
    </location>
</feature>
<feature type="binding site" evidence="1">
    <location>
        <begin position="169"/>
        <end position="176"/>
    </location>
    <ligand>
        <name>ATP</name>
        <dbReference type="ChEBI" id="CHEBI:30616"/>
    </ligand>
</feature>
<feature type="site" description="Required for activity" evidence="1">
    <location>
        <position position="362"/>
    </location>
</feature>
<proteinExistence type="inferred from homology"/>
<dbReference type="EC" id="7.1.2.2" evidence="1"/>
<dbReference type="EMBL" id="CP001390">
    <property type="protein sequence ID" value="ACM18818.1"/>
    <property type="molecule type" value="Genomic_DNA"/>
</dbReference>
<dbReference type="RefSeq" id="WP_012645547.1">
    <property type="nucleotide sequence ID" value="NC_011979.1"/>
</dbReference>
<dbReference type="SMR" id="B9LZ86"/>
<dbReference type="STRING" id="316067.Geob_0449"/>
<dbReference type="KEGG" id="geo:Geob_0449"/>
<dbReference type="eggNOG" id="COG0056">
    <property type="taxonomic scope" value="Bacteria"/>
</dbReference>
<dbReference type="HOGENOM" id="CLU_010091_2_1_7"/>
<dbReference type="OrthoDB" id="9803053at2"/>
<dbReference type="Proteomes" id="UP000007721">
    <property type="component" value="Chromosome"/>
</dbReference>
<dbReference type="GO" id="GO:0005886">
    <property type="term" value="C:plasma membrane"/>
    <property type="evidence" value="ECO:0007669"/>
    <property type="project" value="UniProtKB-SubCell"/>
</dbReference>
<dbReference type="GO" id="GO:0045259">
    <property type="term" value="C:proton-transporting ATP synthase complex"/>
    <property type="evidence" value="ECO:0007669"/>
    <property type="project" value="UniProtKB-KW"/>
</dbReference>
<dbReference type="GO" id="GO:0043531">
    <property type="term" value="F:ADP binding"/>
    <property type="evidence" value="ECO:0007669"/>
    <property type="project" value="TreeGrafter"/>
</dbReference>
<dbReference type="GO" id="GO:0005524">
    <property type="term" value="F:ATP binding"/>
    <property type="evidence" value="ECO:0007669"/>
    <property type="project" value="UniProtKB-UniRule"/>
</dbReference>
<dbReference type="GO" id="GO:0046933">
    <property type="term" value="F:proton-transporting ATP synthase activity, rotational mechanism"/>
    <property type="evidence" value="ECO:0007669"/>
    <property type="project" value="UniProtKB-UniRule"/>
</dbReference>
<dbReference type="CDD" id="cd18113">
    <property type="entry name" value="ATP-synt_F1_alpha_C"/>
    <property type="match status" value="1"/>
</dbReference>
<dbReference type="CDD" id="cd18116">
    <property type="entry name" value="ATP-synt_F1_alpha_N"/>
    <property type="match status" value="1"/>
</dbReference>
<dbReference type="CDD" id="cd01132">
    <property type="entry name" value="F1-ATPase_alpha_CD"/>
    <property type="match status" value="1"/>
</dbReference>
<dbReference type="FunFam" id="1.20.150.20:FF:000001">
    <property type="entry name" value="ATP synthase subunit alpha"/>
    <property type="match status" value="1"/>
</dbReference>
<dbReference type="FunFam" id="2.40.30.20:FF:000001">
    <property type="entry name" value="ATP synthase subunit alpha"/>
    <property type="match status" value="1"/>
</dbReference>
<dbReference type="FunFam" id="3.40.50.300:FF:000002">
    <property type="entry name" value="ATP synthase subunit alpha"/>
    <property type="match status" value="1"/>
</dbReference>
<dbReference type="Gene3D" id="2.40.30.20">
    <property type="match status" value="1"/>
</dbReference>
<dbReference type="Gene3D" id="1.20.150.20">
    <property type="entry name" value="ATP synthase alpha/beta chain, C-terminal domain"/>
    <property type="match status" value="1"/>
</dbReference>
<dbReference type="Gene3D" id="3.40.50.300">
    <property type="entry name" value="P-loop containing nucleotide triphosphate hydrolases"/>
    <property type="match status" value="1"/>
</dbReference>
<dbReference type="HAMAP" id="MF_01346">
    <property type="entry name" value="ATP_synth_alpha_bact"/>
    <property type="match status" value="1"/>
</dbReference>
<dbReference type="InterPro" id="IPR023366">
    <property type="entry name" value="ATP_synth_asu-like_sf"/>
</dbReference>
<dbReference type="InterPro" id="IPR000793">
    <property type="entry name" value="ATP_synth_asu_C"/>
</dbReference>
<dbReference type="InterPro" id="IPR038376">
    <property type="entry name" value="ATP_synth_asu_C_sf"/>
</dbReference>
<dbReference type="InterPro" id="IPR033732">
    <property type="entry name" value="ATP_synth_F1_a_nt-bd_dom"/>
</dbReference>
<dbReference type="InterPro" id="IPR005294">
    <property type="entry name" value="ATP_synth_F1_asu"/>
</dbReference>
<dbReference type="InterPro" id="IPR020003">
    <property type="entry name" value="ATPase_a/bsu_AS"/>
</dbReference>
<dbReference type="InterPro" id="IPR004100">
    <property type="entry name" value="ATPase_F1/V1/A1_a/bsu_N"/>
</dbReference>
<dbReference type="InterPro" id="IPR036121">
    <property type="entry name" value="ATPase_F1/V1/A1_a/bsu_N_sf"/>
</dbReference>
<dbReference type="InterPro" id="IPR000194">
    <property type="entry name" value="ATPase_F1/V1/A1_a/bsu_nucl-bd"/>
</dbReference>
<dbReference type="InterPro" id="IPR027417">
    <property type="entry name" value="P-loop_NTPase"/>
</dbReference>
<dbReference type="NCBIfam" id="TIGR00962">
    <property type="entry name" value="atpA"/>
    <property type="match status" value="1"/>
</dbReference>
<dbReference type="NCBIfam" id="NF009884">
    <property type="entry name" value="PRK13343.1"/>
    <property type="match status" value="1"/>
</dbReference>
<dbReference type="PANTHER" id="PTHR48082">
    <property type="entry name" value="ATP SYNTHASE SUBUNIT ALPHA, MITOCHONDRIAL"/>
    <property type="match status" value="1"/>
</dbReference>
<dbReference type="PANTHER" id="PTHR48082:SF2">
    <property type="entry name" value="ATP SYNTHASE SUBUNIT ALPHA, MITOCHONDRIAL"/>
    <property type="match status" value="1"/>
</dbReference>
<dbReference type="Pfam" id="PF00006">
    <property type="entry name" value="ATP-synt_ab"/>
    <property type="match status" value="1"/>
</dbReference>
<dbReference type="Pfam" id="PF00306">
    <property type="entry name" value="ATP-synt_ab_C"/>
    <property type="match status" value="1"/>
</dbReference>
<dbReference type="Pfam" id="PF02874">
    <property type="entry name" value="ATP-synt_ab_N"/>
    <property type="match status" value="1"/>
</dbReference>
<dbReference type="PIRSF" id="PIRSF039088">
    <property type="entry name" value="F_ATPase_subunit_alpha"/>
    <property type="match status" value="1"/>
</dbReference>
<dbReference type="SUPFAM" id="SSF47917">
    <property type="entry name" value="C-terminal domain of alpha and beta subunits of F1 ATP synthase"/>
    <property type="match status" value="1"/>
</dbReference>
<dbReference type="SUPFAM" id="SSF50615">
    <property type="entry name" value="N-terminal domain of alpha and beta subunits of F1 ATP synthase"/>
    <property type="match status" value="1"/>
</dbReference>
<dbReference type="SUPFAM" id="SSF52540">
    <property type="entry name" value="P-loop containing nucleoside triphosphate hydrolases"/>
    <property type="match status" value="1"/>
</dbReference>
<dbReference type="PROSITE" id="PS00152">
    <property type="entry name" value="ATPASE_ALPHA_BETA"/>
    <property type="match status" value="1"/>
</dbReference>
<keyword id="KW-0066">ATP synthesis</keyword>
<keyword id="KW-0067">ATP-binding</keyword>
<keyword id="KW-0997">Cell inner membrane</keyword>
<keyword id="KW-1003">Cell membrane</keyword>
<keyword id="KW-0139">CF(1)</keyword>
<keyword id="KW-0375">Hydrogen ion transport</keyword>
<keyword id="KW-0406">Ion transport</keyword>
<keyword id="KW-0472">Membrane</keyword>
<keyword id="KW-0547">Nucleotide-binding</keyword>
<keyword id="KW-1185">Reference proteome</keyword>
<keyword id="KW-1278">Translocase</keyword>
<keyword id="KW-0813">Transport</keyword>
<name>ATPA_GEODF</name>
<protein>
    <recommendedName>
        <fullName evidence="1">ATP synthase subunit alpha</fullName>
        <ecNumber evidence="1">7.1.2.2</ecNumber>
    </recommendedName>
    <alternativeName>
        <fullName evidence="1">ATP synthase F1 sector subunit alpha</fullName>
    </alternativeName>
    <alternativeName>
        <fullName evidence="1">F-ATPase subunit alpha</fullName>
    </alternativeName>
</protein>
<gene>
    <name evidence="1" type="primary">atpA</name>
    <name type="ordered locus">Geob_0449</name>
</gene>
<reference key="1">
    <citation type="submission" date="2009-01" db="EMBL/GenBank/DDBJ databases">
        <title>Complete sequence of Geobacter sp. FRC-32.</title>
        <authorList>
            <consortium name="US DOE Joint Genome Institute"/>
            <person name="Lucas S."/>
            <person name="Copeland A."/>
            <person name="Lapidus A."/>
            <person name="Glavina del Rio T."/>
            <person name="Dalin E."/>
            <person name="Tice H."/>
            <person name="Bruce D."/>
            <person name="Goodwin L."/>
            <person name="Pitluck S."/>
            <person name="Saunders E."/>
            <person name="Brettin T."/>
            <person name="Detter J.C."/>
            <person name="Han C."/>
            <person name="Larimer F."/>
            <person name="Land M."/>
            <person name="Hauser L."/>
            <person name="Kyrpides N."/>
            <person name="Ovchinnikova G."/>
            <person name="Kostka J."/>
            <person name="Richardson P."/>
        </authorList>
    </citation>
    <scope>NUCLEOTIDE SEQUENCE [LARGE SCALE GENOMIC DNA]</scope>
    <source>
        <strain>DSM 22248 / JCM 15807 / FRC-32</strain>
    </source>
</reference>
<comment type="function">
    <text evidence="1">Produces ATP from ADP in the presence of a proton gradient across the membrane. The alpha chain is a regulatory subunit.</text>
</comment>
<comment type="catalytic activity">
    <reaction evidence="1">
        <text>ATP + H2O + 4 H(+)(in) = ADP + phosphate + 5 H(+)(out)</text>
        <dbReference type="Rhea" id="RHEA:57720"/>
        <dbReference type="ChEBI" id="CHEBI:15377"/>
        <dbReference type="ChEBI" id="CHEBI:15378"/>
        <dbReference type="ChEBI" id="CHEBI:30616"/>
        <dbReference type="ChEBI" id="CHEBI:43474"/>
        <dbReference type="ChEBI" id="CHEBI:456216"/>
        <dbReference type="EC" id="7.1.2.2"/>
    </reaction>
</comment>
<comment type="subunit">
    <text evidence="1">F-type ATPases have 2 components, CF(1) - the catalytic core - and CF(0) - the membrane proton channel. CF(1) has five subunits: alpha(3), beta(3), gamma(1), delta(1), epsilon(1). CF(0) has three main subunits: a(1), b(2) and c(9-12). The alpha and beta chains form an alternating ring which encloses part of the gamma chain. CF(1) is attached to CF(0) by a central stalk formed by the gamma and epsilon chains, while a peripheral stalk is formed by the delta and b chains.</text>
</comment>
<comment type="subcellular location">
    <subcellularLocation>
        <location evidence="1">Cell inner membrane</location>
        <topology evidence="1">Peripheral membrane protein</topology>
    </subcellularLocation>
</comment>
<comment type="similarity">
    <text evidence="1">Belongs to the ATPase alpha/beta chains family.</text>
</comment>
<organism>
    <name type="scientific">Geotalea daltonii (strain DSM 22248 / JCM 15807 / FRC-32)</name>
    <name type="common">Geobacter daltonii</name>
    <dbReference type="NCBI Taxonomy" id="316067"/>
    <lineage>
        <taxon>Bacteria</taxon>
        <taxon>Pseudomonadati</taxon>
        <taxon>Thermodesulfobacteriota</taxon>
        <taxon>Desulfuromonadia</taxon>
        <taxon>Geobacterales</taxon>
        <taxon>Geobacteraceae</taxon>
        <taxon>Geotalea</taxon>
    </lineage>
</organism>
<evidence type="ECO:0000255" key="1">
    <source>
        <dbReference type="HAMAP-Rule" id="MF_01346"/>
    </source>
</evidence>
<accession>B9LZ86</accession>
<sequence>MEIRAEEISEIIRKQIKEYGSEVEVAETGTIISIGDGIARIHGLDKAMAGELLEFPGGISGMALNLEEDNVGAAILGEFSEIKEGDTVKRTNRIVEVPVGEALIGRVVNAIGQPIDGKGPINTDKFGKVEVKAPGIVKRKSVHQPMQTGLKAIDAMVPIGRGQRELIIGDRQTGKTAVAIDTIINQKGGDVVCIYVAIGQKRSTVAQVVSKLQEHGAMDYTIIVAATASEPAPLQFISPYTGVTMGEYFRDNGKHALIIYDDLSKQAVAYRQLSLLLRRPPGREAYPGDVFYLHSRLLERACKVSDACGAGSLTALPIIETQAGDVSAYIPTNVISITDGQIYLESDLFYSGVRPAINVGLSVSRVGGSAQVKAMKQVAGTLRLSLAQYREMAAFAQFGSDLDKATQMQLARGERLVEVLKQPQYRPIPNEKQVLIIFAANNGYIDEYPVASLGRYESELYSFFDARKSDLLAELRDKKAIDDDIKAKIVSALEEFKKEFTA</sequence>